<keyword id="KW-0501">Molybdenum cofactor biosynthesis</keyword>
<keyword id="KW-0808">Transferase</keyword>
<evidence type="ECO:0000250" key="1"/>
<evidence type="ECO:0000305" key="2"/>
<protein>
    <recommendedName>
        <fullName>Molybdopterin synthase catalytic subunit</fullName>
        <ecNumber>2.8.1.12</ecNumber>
    </recommendedName>
    <alternativeName>
        <fullName>MPT synthase subunit 2</fullName>
    </alternativeName>
    <alternativeName>
        <fullName>Molybdenum cofactor biosynthesis protein E</fullName>
    </alternativeName>
    <alternativeName>
        <fullName>Molybdopterin-converting factor large subunit</fullName>
    </alternativeName>
    <alternativeName>
        <fullName>Molybdopterin-converting factor subunit 2</fullName>
    </alternativeName>
</protein>
<accession>P65400</accession>
<accession>Q99S01</accession>
<proteinExistence type="inferred from homology"/>
<sequence length="148" mass="17351">MKQFEIVIEPIQTEQYREFTINEYQGAVVVFTGHVREWTKGVKTEYLEYEAYIPMAEKKLAQIGDEINEKWPGTITSIVHRIGPLQISDIAVLIAVSSPHRKDAYRANEYAIERIKEIVPIWKKEIWEDGSKWQGHQKGNYEEAKREE</sequence>
<comment type="function">
    <text evidence="1">Converts molybdopterin precursor Z into molybdopterin. This requires the incorporation of two sulfur atoms into precursor Z to generate a dithiolene group. The sulfur is provided by MoaD (By similarity).</text>
</comment>
<comment type="catalytic activity">
    <reaction>
        <text>2 [molybdopterin-synthase sulfur-carrier protein]-C-terminal-Gly-aminoethanethioate + cyclic pyranopterin phosphate + H2O = molybdopterin + 2 [molybdopterin-synthase sulfur-carrier protein]-C-terminal Gly-Gly + 2 H(+)</text>
        <dbReference type="Rhea" id="RHEA:26333"/>
        <dbReference type="Rhea" id="RHEA-COMP:12202"/>
        <dbReference type="Rhea" id="RHEA-COMP:19907"/>
        <dbReference type="ChEBI" id="CHEBI:15377"/>
        <dbReference type="ChEBI" id="CHEBI:15378"/>
        <dbReference type="ChEBI" id="CHEBI:58698"/>
        <dbReference type="ChEBI" id="CHEBI:59648"/>
        <dbReference type="ChEBI" id="CHEBI:90778"/>
        <dbReference type="ChEBI" id="CHEBI:232372"/>
        <dbReference type="EC" id="2.8.1.12"/>
    </reaction>
</comment>
<comment type="pathway">
    <text>Cofactor biosynthesis; molybdopterin biosynthesis.</text>
</comment>
<comment type="subunit">
    <text evidence="1">Heterotetramer of 2 MoaD subunits and 2 MoaE subunits. Also stable as homodimer. The enzyme changes between these two forms during catalysis (By similarity).</text>
</comment>
<comment type="similarity">
    <text evidence="2">Belongs to the MoaE family.</text>
</comment>
<name>MOAE_STAAM</name>
<organism>
    <name type="scientific">Staphylococcus aureus (strain Mu50 / ATCC 700699)</name>
    <dbReference type="NCBI Taxonomy" id="158878"/>
    <lineage>
        <taxon>Bacteria</taxon>
        <taxon>Bacillati</taxon>
        <taxon>Bacillota</taxon>
        <taxon>Bacilli</taxon>
        <taxon>Bacillales</taxon>
        <taxon>Staphylococcaceae</taxon>
        <taxon>Staphylococcus</taxon>
    </lineage>
</organism>
<reference key="1">
    <citation type="journal article" date="2001" name="Lancet">
        <title>Whole genome sequencing of meticillin-resistant Staphylococcus aureus.</title>
        <authorList>
            <person name="Kuroda M."/>
            <person name="Ohta T."/>
            <person name="Uchiyama I."/>
            <person name="Baba T."/>
            <person name="Yuzawa H."/>
            <person name="Kobayashi I."/>
            <person name="Cui L."/>
            <person name="Oguchi A."/>
            <person name="Aoki K."/>
            <person name="Nagai Y."/>
            <person name="Lian J.-Q."/>
            <person name="Ito T."/>
            <person name="Kanamori M."/>
            <person name="Matsumaru H."/>
            <person name="Maruyama A."/>
            <person name="Murakami H."/>
            <person name="Hosoyama A."/>
            <person name="Mizutani-Ui Y."/>
            <person name="Takahashi N.K."/>
            <person name="Sawano T."/>
            <person name="Inoue R."/>
            <person name="Kaito C."/>
            <person name="Sekimizu K."/>
            <person name="Hirakawa H."/>
            <person name="Kuhara S."/>
            <person name="Goto S."/>
            <person name="Yabuzaki J."/>
            <person name="Kanehisa M."/>
            <person name="Yamashita A."/>
            <person name="Oshima K."/>
            <person name="Furuya K."/>
            <person name="Yoshino C."/>
            <person name="Shiba T."/>
            <person name="Hattori M."/>
            <person name="Ogasawara N."/>
            <person name="Hayashi H."/>
            <person name="Hiramatsu K."/>
        </authorList>
    </citation>
    <scope>NUCLEOTIDE SEQUENCE [LARGE SCALE GENOMIC DNA]</scope>
    <source>
        <strain>Mu50 / ATCC 700699</strain>
    </source>
</reference>
<gene>
    <name type="primary">moaE</name>
    <name type="ordered locus">SAV2271</name>
</gene>
<dbReference type="EC" id="2.8.1.12"/>
<dbReference type="EMBL" id="BA000017">
    <property type="protein sequence ID" value="BAB58433.1"/>
    <property type="molecule type" value="Genomic_DNA"/>
</dbReference>
<dbReference type="RefSeq" id="WP_000808495.1">
    <property type="nucleotide sequence ID" value="NC_002758.2"/>
</dbReference>
<dbReference type="SMR" id="P65400"/>
<dbReference type="KEGG" id="sav:SAV2271"/>
<dbReference type="HOGENOM" id="CLU_089568_1_2_9"/>
<dbReference type="PhylomeDB" id="P65400"/>
<dbReference type="UniPathway" id="UPA00344"/>
<dbReference type="Proteomes" id="UP000002481">
    <property type="component" value="Chromosome"/>
</dbReference>
<dbReference type="GO" id="GO:0030366">
    <property type="term" value="F:molybdopterin synthase activity"/>
    <property type="evidence" value="ECO:0007669"/>
    <property type="project" value="UniProtKB-EC"/>
</dbReference>
<dbReference type="GO" id="GO:0006777">
    <property type="term" value="P:Mo-molybdopterin cofactor biosynthetic process"/>
    <property type="evidence" value="ECO:0007669"/>
    <property type="project" value="UniProtKB-KW"/>
</dbReference>
<dbReference type="CDD" id="cd00756">
    <property type="entry name" value="MoaE"/>
    <property type="match status" value="1"/>
</dbReference>
<dbReference type="FunFam" id="3.90.1170.40:FF:000003">
    <property type="entry name" value="Molybdopterin converting factor subunit 2"/>
    <property type="match status" value="1"/>
</dbReference>
<dbReference type="Gene3D" id="3.90.1170.40">
    <property type="entry name" value="Molybdopterin biosynthesis MoaE subunit"/>
    <property type="match status" value="1"/>
</dbReference>
<dbReference type="InterPro" id="IPR036563">
    <property type="entry name" value="MoaE_sf"/>
</dbReference>
<dbReference type="InterPro" id="IPR003448">
    <property type="entry name" value="Mopterin_biosynth_MoaE"/>
</dbReference>
<dbReference type="PANTHER" id="PTHR23404">
    <property type="entry name" value="MOLYBDOPTERIN SYNTHASE RELATED"/>
    <property type="match status" value="1"/>
</dbReference>
<dbReference type="Pfam" id="PF02391">
    <property type="entry name" value="MoaE"/>
    <property type="match status" value="1"/>
</dbReference>
<dbReference type="SUPFAM" id="SSF54690">
    <property type="entry name" value="Molybdopterin synthase subunit MoaE"/>
    <property type="match status" value="1"/>
</dbReference>
<feature type="chain" id="PRO_0000163098" description="Molybdopterin synthase catalytic subunit">
    <location>
        <begin position="1"/>
        <end position="148"/>
    </location>
</feature>
<feature type="binding site" evidence="1">
    <location>
        <begin position="34"/>
        <end position="36"/>
    </location>
    <ligand>
        <name>substrate</name>
    </ligand>
</feature>
<feature type="binding site" evidence="1">
    <location>
        <position position="44"/>
    </location>
    <ligand>
        <name>substrate</name>
    </ligand>
</feature>
<feature type="binding site" evidence="1">
    <location>
        <begin position="100"/>
        <end position="101"/>
    </location>
    <ligand>
        <name>substrate</name>
    </ligand>
</feature>
<feature type="binding site" evidence="1">
    <location>
        <position position="116"/>
    </location>
    <ligand>
        <name>substrate</name>
    </ligand>
</feature>
<feature type="binding site" evidence="1">
    <location>
        <begin position="123"/>
        <end position="125"/>
    </location>
    <ligand>
        <name>substrate</name>
    </ligand>
</feature>